<protein>
    <recommendedName>
        <fullName evidence="1">Large ribosomal subunit protein uL15</fullName>
    </recommendedName>
    <alternativeName>
        <fullName evidence="3">50S ribosomal protein L15</fullName>
    </alternativeName>
</protein>
<sequence length="144" mass="14966">MRLNTLSPAEGSKKAGKRLGRGIGSGLGKTGGRGHKGQKSRSGGGVRRGFEGGQMPLYRRLPKFGFTSRKAAITAEVRLSDLAKVEGGVVDLNTLKAANIIGIQIEFAKVILAGEVTTPVTVRGLRVTKGARAAIEAAGGKIEE</sequence>
<dbReference type="EMBL" id="CP000026">
    <property type="protein sequence ID" value="AAV79103.1"/>
    <property type="molecule type" value="Genomic_DNA"/>
</dbReference>
<dbReference type="RefSeq" id="WP_001238917.1">
    <property type="nucleotide sequence ID" value="NC_006511.1"/>
</dbReference>
<dbReference type="SMR" id="Q5PK03"/>
<dbReference type="GeneID" id="93778686"/>
<dbReference type="KEGG" id="spt:SPA3287"/>
<dbReference type="HOGENOM" id="CLU_055188_4_2_6"/>
<dbReference type="Proteomes" id="UP000008185">
    <property type="component" value="Chromosome"/>
</dbReference>
<dbReference type="GO" id="GO:0022625">
    <property type="term" value="C:cytosolic large ribosomal subunit"/>
    <property type="evidence" value="ECO:0007669"/>
    <property type="project" value="TreeGrafter"/>
</dbReference>
<dbReference type="GO" id="GO:0019843">
    <property type="term" value="F:rRNA binding"/>
    <property type="evidence" value="ECO:0007669"/>
    <property type="project" value="UniProtKB-UniRule"/>
</dbReference>
<dbReference type="GO" id="GO:0003735">
    <property type="term" value="F:structural constituent of ribosome"/>
    <property type="evidence" value="ECO:0007669"/>
    <property type="project" value="InterPro"/>
</dbReference>
<dbReference type="GO" id="GO:0006412">
    <property type="term" value="P:translation"/>
    <property type="evidence" value="ECO:0007669"/>
    <property type="project" value="UniProtKB-UniRule"/>
</dbReference>
<dbReference type="FunFam" id="3.100.10.10:FF:000003">
    <property type="entry name" value="50S ribosomal protein L15"/>
    <property type="match status" value="1"/>
</dbReference>
<dbReference type="Gene3D" id="3.100.10.10">
    <property type="match status" value="1"/>
</dbReference>
<dbReference type="HAMAP" id="MF_01341">
    <property type="entry name" value="Ribosomal_uL15"/>
    <property type="match status" value="1"/>
</dbReference>
<dbReference type="InterPro" id="IPR030878">
    <property type="entry name" value="Ribosomal_uL15"/>
</dbReference>
<dbReference type="InterPro" id="IPR021131">
    <property type="entry name" value="Ribosomal_uL15/eL18"/>
</dbReference>
<dbReference type="InterPro" id="IPR036227">
    <property type="entry name" value="Ribosomal_uL15/eL18_sf"/>
</dbReference>
<dbReference type="InterPro" id="IPR005749">
    <property type="entry name" value="Ribosomal_uL15_bac-type"/>
</dbReference>
<dbReference type="InterPro" id="IPR001196">
    <property type="entry name" value="Ribosomal_uL15_CS"/>
</dbReference>
<dbReference type="NCBIfam" id="TIGR01071">
    <property type="entry name" value="rplO_bact"/>
    <property type="match status" value="1"/>
</dbReference>
<dbReference type="PANTHER" id="PTHR12934">
    <property type="entry name" value="50S RIBOSOMAL PROTEIN L15"/>
    <property type="match status" value="1"/>
</dbReference>
<dbReference type="PANTHER" id="PTHR12934:SF11">
    <property type="entry name" value="LARGE RIBOSOMAL SUBUNIT PROTEIN UL15M"/>
    <property type="match status" value="1"/>
</dbReference>
<dbReference type="Pfam" id="PF00828">
    <property type="entry name" value="Ribosomal_L27A"/>
    <property type="match status" value="1"/>
</dbReference>
<dbReference type="SUPFAM" id="SSF52080">
    <property type="entry name" value="Ribosomal proteins L15p and L18e"/>
    <property type="match status" value="1"/>
</dbReference>
<dbReference type="PROSITE" id="PS00475">
    <property type="entry name" value="RIBOSOMAL_L15"/>
    <property type="match status" value="1"/>
</dbReference>
<gene>
    <name evidence="1" type="primary">rplO</name>
    <name type="ordered locus">SPA3287</name>
</gene>
<comment type="function">
    <text evidence="1">Binds to the 23S rRNA.</text>
</comment>
<comment type="subunit">
    <text evidence="1">Part of the 50S ribosomal subunit.</text>
</comment>
<comment type="similarity">
    <text evidence="1">Belongs to the universal ribosomal protein uL15 family.</text>
</comment>
<organism>
    <name type="scientific">Salmonella paratyphi A (strain ATCC 9150 / SARB42)</name>
    <dbReference type="NCBI Taxonomy" id="295319"/>
    <lineage>
        <taxon>Bacteria</taxon>
        <taxon>Pseudomonadati</taxon>
        <taxon>Pseudomonadota</taxon>
        <taxon>Gammaproteobacteria</taxon>
        <taxon>Enterobacterales</taxon>
        <taxon>Enterobacteriaceae</taxon>
        <taxon>Salmonella</taxon>
    </lineage>
</organism>
<name>RL15_SALPA</name>
<accession>Q5PK03</accession>
<keyword id="KW-0687">Ribonucleoprotein</keyword>
<keyword id="KW-0689">Ribosomal protein</keyword>
<keyword id="KW-0694">RNA-binding</keyword>
<keyword id="KW-0699">rRNA-binding</keyword>
<proteinExistence type="inferred from homology"/>
<reference key="1">
    <citation type="journal article" date="2004" name="Nat. Genet.">
        <title>Comparison of genome degradation in Paratyphi A and Typhi, human-restricted serovars of Salmonella enterica that cause typhoid.</title>
        <authorList>
            <person name="McClelland M."/>
            <person name="Sanderson K.E."/>
            <person name="Clifton S.W."/>
            <person name="Latreille P."/>
            <person name="Porwollik S."/>
            <person name="Sabo A."/>
            <person name="Meyer R."/>
            <person name="Bieri T."/>
            <person name="Ozersky P."/>
            <person name="McLellan M."/>
            <person name="Harkins C.R."/>
            <person name="Wang C."/>
            <person name="Nguyen C."/>
            <person name="Berghoff A."/>
            <person name="Elliott G."/>
            <person name="Kohlberg S."/>
            <person name="Strong C."/>
            <person name="Du F."/>
            <person name="Carter J."/>
            <person name="Kremizki C."/>
            <person name="Layman D."/>
            <person name="Leonard S."/>
            <person name="Sun H."/>
            <person name="Fulton L."/>
            <person name="Nash W."/>
            <person name="Miner T."/>
            <person name="Minx P."/>
            <person name="Delehaunty K."/>
            <person name="Fronick C."/>
            <person name="Magrini V."/>
            <person name="Nhan M."/>
            <person name="Warren W."/>
            <person name="Florea L."/>
            <person name="Spieth J."/>
            <person name="Wilson R.K."/>
        </authorList>
    </citation>
    <scope>NUCLEOTIDE SEQUENCE [LARGE SCALE GENOMIC DNA]</scope>
    <source>
        <strain>ATCC 9150 / SARB42</strain>
    </source>
</reference>
<evidence type="ECO:0000255" key="1">
    <source>
        <dbReference type="HAMAP-Rule" id="MF_01341"/>
    </source>
</evidence>
<evidence type="ECO:0000256" key="2">
    <source>
        <dbReference type="SAM" id="MobiDB-lite"/>
    </source>
</evidence>
<evidence type="ECO:0000305" key="3"/>
<feature type="chain" id="PRO_0000104800" description="Large ribosomal subunit protein uL15">
    <location>
        <begin position="1"/>
        <end position="144"/>
    </location>
</feature>
<feature type="region of interest" description="Disordered" evidence="2">
    <location>
        <begin position="1"/>
        <end position="54"/>
    </location>
</feature>
<feature type="compositionally biased region" description="Gly residues" evidence="2">
    <location>
        <begin position="21"/>
        <end position="31"/>
    </location>
</feature>